<organism>
    <name type="scientific">Sus scrofa</name>
    <name type="common">Pig</name>
    <dbReference type="NCBI Taxonomy" id="9823"/>
    <lineage>
        <taxon>Eukaryota</taxon>
        <taxon>Metazoa</taxon>
        <taxon>Chordata</taxon>
        <taxon>Craniata</taxon>
        <taxon>Vertebrata</taxon>
        <taxon>Euteleostomi</taxon>
        <taxon>Mammalia</taxon>
        <taxon>Eutheria</taxon>
        <taxon>Laurasiatheria</taxon>
        <taxon>Artiodactyla</taxon>
        <taxon>Suina</taxon>
        <taxon>Suidae</taxon>
        <taxon>Sus</taxon>
    </lineage>
</organism>
<protein>
    <recommendedName>
        <fullName evidence="10">RNA-binding protein 20</fullName>
    </recommendedName>
    <alternativeName>
        <fullName evidence="10">RNA-binding motif protein 20</fullName>
    </alternativeName>
</protein>
<name>RBM20_PIG</name>
<accession>P0DW16</accession>
<gene>
    <name evidence="9" type="primary">RBM20</name>
</gene>
<dbReference type="SMR" id="P0DW16"/>
<dbReference type="GlyGen" id="P0DW16">
    <property type="glycosylation" value="2 sites"/>
</dbReference>
<dbReference type="Ensembl" id="ENSSSCT00070016754.1">
    <property type="protein sequence ID" value="ENSSSCP00070013890.1"/>
    <property type="gene ID" value="ENSSSCG00070008641.1"/>
</dbReference>
<dbReference type="Ensembl" id="ENSSSCT00110039857">
    <property type="protein sequence ID" value="ENSSSCP00110027686"/>
    <property type="gene ID" value="ENSSSCG00110020663"/>
</dbReference>
<dbReference type="Proteomes" id="UP000008227">
    <property type="component" value="Unplaced"/>
</dbReference>
<dbReference type="Proteomes" id="UP000314985">
    <property type="component" value="Chromosome 14"/>
</dbReference>
<dbReference type="Proteomes" id="UP000694570">
    <property type="component" value="Unplaced"/>
</dbReference>
<dbReference type="Proteomes" id="UP000694571">
    <property type="component" value="Unplaced"/>
</dbReference>
<dbReference type="Proteomes" id="UP000694720">
    <property type="component" value="Unplaced"/>
</dbReference>
<dbReference type="Proteomes" id="UP000694722">
    <property type="component" value="Unplaced"/>
</dbReference>
<dbReference type="Proteomes" id="UP000694723">
    <property type="component" value="Unplaced"/>
</dbReference>
<dbReference type="Proteomes" id="UP000694724">
    <property type="component" value="Unplaced"/>
</dbReference>
<dbReference type="Proteomes" id="UP000694725">
    <property type="component" value="Unplaced"/>
</dbReference>
<dbReference type="Proteomes" id="UP000694726">
    <property type="component" value="Unplaced"/>
</dbReference>
<dbReference type="Proteomes" id="UP000694727">
    <property type="component" value="Unplaced"/>
</dbReference>
<dbReference type="Proteomes" id="UP000694728">
    <property type="component" value="Unplaced"/>
</dbReference>
<dbReference type="GO" id="GO:0036464">
    <property type="term" value="C:cytoplasmic ribonucleoprotein granule"/>
    <property type="evidence" value="ECO:0000314"/>
    <property type="project" value="UniProtKB"/>
</dbReference>
<dbReference type="GO" id="GO:0005634">
    <property type="term" value="C:nucleus"/>
    <property type="evidence" value="ECO:0000314"/>
    <property type="project" value="UniProtKB"/>
</dbReference>
<dbReference type="GO" id="GO:0003729">
    <property type="term" value="F:mRNA binding"/>
    <property type="evidence" value="ECO:0000318"/>
    <property type="project" value="GO_Central"/>
</dbReference>
<dbReference type="GO" id="GO:0097157">
    <property type="term" value="F:pre-mRNA intronic binding"/>
    <property type="evidence" value="ECO:0000250"/>
    <property type="project" value="UniProtKB"/>
</dbReference>
<dbReference type="GO" id="GO:1990935">
    <property type="term" value="F:splicing factor binding"/>
    <property type="evidence" value="ECO:0000250"/>
    <property type="project" value="UniProtKB"/>
</dbReference>
<dbReference type="GO" id="GO:0008270">
    <property type="term" value="F:zinc ion binding"/>
    <property type="evidence" value="ECO:0007669"/>
    <property type="project" value="UniProtKB-KW"/>
</dbReference>
<dbReference type="GO" id="GO:0060914">
    <property type="term" value="P:heart formation"/>
    <property type="evidence" value="ECO:0000315"/>
    <property type="project" value="UniProtKB"/>
</dbReference>
<dbReference type="GO" id="GO:0006397">
    <property type="term" value="P:mRNA processing"/>
    <property type="evidence" value="ECO:0007669"/>
    <property type="project" value="UniProtKB-KW"/>
</dbReference>
<dbReference type="GO" id="GO:0048024">
    <property type="term" value="P:regulation of mRNA splicing, via spliceosome"/>
    <property type="evidence" value="ECO:0000315"/>
    <property type="project" value="UniProtKB"/>
</dbReference>
<dbReference type="GO" id="GO:0043484">
    <property type="term" value="P:regulation of RNA splicing"/>
    <property type="evidence" value="ECO:0000318"/>
    <property type="project" value="GO_Central"/>
</dbReference>
<dbReference type="GO" id="GO:0008380">
    <property type="term" value="P:RNA splicing"/>
    <property type="evidence" value="ECO:0007669"/>
    <property type="project" value="UniProtKB-KW"/>
</dbReference>
<dbReference type="CDD" id="cd12685">
    <property type="entry name" value="RRM_RBM20"/>
    <property type="match status" value="1"/>
</dbReference>
<dbReference type="FunFam" id="3.30.70.330:FF:000270">
    <property type="entry name" value="RNA binding motif protein 20"/>
    <property type="match status" value="1"/>
</dbReference>
<dbReference type="Gene3D" id="3.30.70.330">
    <property type="match status" value="1"/>
</dbReference>
<dbReference type="InterPro" id="IPR000690">
    <property type="entry name" value="Matrin/U1-C_Znf_C2H2"/>
</dbReference>
<dbReference type="InterPro" id="IPR003604">
    <property type="entry name" value="Matrin/U1-like-C_Znf_C2H2"/>
</dbReference>
<dbReference type="InterPro" id="IPR012677">
    <property type="entry name" value="Nucleotide-bd_a/b_plait_sf"/>
</dbReference>
<dbReference type="InterPro" id="IPR035979">
    <property type="entry name" value="RBD_domain_sf"/>
</dbReference>
<dbReference type="InterPro" id="IPR034790">
    <property type="entry name" value="RBM20_RRM"/>
</dbReference>
<dbReference type="InterPro" id="IPR000504">
    <property type="entry name" value="RRM_dom"/>
</dbReference>
<dbReference type="PANTHER" id="PTHR15592">
    <property type="entry name" value="MATRIN 3/NUCLEAR PROTEIN 220-RELATED"/>
    <property type="match status" value="1"/>
</dbReference>
<dbReference type="SMART" id="SM00360">
    <property type="entry name" value="RRM"/>
    <property type="match status" value="1"/>
</dbReference>
<dbReference type="SMART" id="SM00451">
    <property type="entry name" value="ZnF_U1"/>
    <property type="match status" value="2"/>
</dbReference>
<dbReference type="SUPFAM" id="SSF54928">
    <property type="entry name" value="RNA-binding domain, RBD"/>
    <property type="match status" value="1"/>
</dbReference>
<dbReference type="PROSITE" id="PS50102">
    <property type="entry name" value="RRM"/>
    <property type="match status" value="1"/>
</dbReference>
<dbReference type="PROSITE" id="PS50171">
    <property type="entry name" value="ZF_MATRIN"/>
    <property type="match status" value="1"/>
</dbReference>
<feature type="chain" id="PRO_0000456216" description="RNA-binding protein 20">
    <location>
        <begin position="1"/>
        <end position="1223"/>
    </location>
</feature>
<feature type="domain" description="RRM" evidence="6">
    <location>
        <begin position="520"/>
        <end position="595"/>
    </location>
</feature>
<feature type="zinc finger region" description="U1-type" evidence="4">
    <location>
        <begin position="410"/>
        <end position="444"/>
    </location>
</feature>
<feature type="zinc finger region" description="Matrin-type" evidence="5">
    <location>
        <begin position="1157"/>
        <end position="1188"/>
    </location>
</feature>
<feature type="region of interest" description="Disordered" evidence="7">
    <location>
        <begin position="1"/>
        <end position="59"/>
    </location>
</feature>
<feature type="region of interest" description="Disordered" evidence="7">
    <location>
        <begin position="238"/>
        <end position="288"/>
    </location>
</feature>
<feature type="region of interest" description="Disordered" evidence="7">
    <location>
        <begin position="306"/>
        <end position="381"/>
    </location>
</feature>
<feature type="region of interest" description="Disordered" evidence="7">
    <location>
        <begin position="626"/>
        <end position="902"/>
    </location>
</feature>
<feature type="region of interest" description="RS" evidence="3">
    <location>
        <begin position="630"/>
        <end position="657"/>
    </location>
</feature>
<feature type="region of interest" description="Disordered" evidence="7">
    <location>
        <begin position="971"/>
        <end position="995"/>
    </location>
</feature>
<feature type="region of interest" description="Disordered" evidence="7">
    <location>
        <begin position="1042"/>
        <end position="1102"/>
    </location>
</feature>
<feature type="region of interest" description="Disordered" evidence="7">
    <location>
        <begin position="1197"/>
        <end position="1223"/>
    </location>
</feature>
<feature type="compositionally biased region" description="Pro residues" evidence="7">
    <location>
        <begin position="29"/>
        <end position="57"/>
    </location>
</feature>
<feature type="compositionally biased region" description="Polar residues" evidence="7">
    <location>
        <begin position="238"/>
        <end position="261"/>
    </location>
</feature>
<feature type="compositionally biased region" description="Polar residues" evidence="7">
    <location>
        <begin position="314"/>
        <end position="331"/>
    </location>
</feature>
<feature type="compositionally biased region" description="Basic and acidic residues" evidence="7">
    <location>
        <begin position="626"/>
        <end position="636"/>
    </location>
</feature>
<feature type="compositionally biased region" description="Low complexity" evidence="7">
    <location>
        <begin position="638"/>
        <end position="662"/>
    </location>
</feature>
<feature type="compositionally biased region" description="Basic and acidic residues" evidence="7">
    <location>
        <begin position="676"/>
        <end position="711"/>
    </location>
</feature>
<feature type="compositionally biased region" description="Basic and acidic residues" evidence="7">
    <location>
        <begin position="718"/>
        <end position="737"/>
    </location>
</feature>
<feature type="compositionally biased region" description="Low complexity" evidence="7">
    <location>
        <begin position="742"/>
        <end position="752"/>
    </location>
</feature>
<feature type="compositionally biased region" description="Basic and acidic residues" evidence="7">
    <location>
        <begin position="755"/>
        <end position="774"/>
    </location>
</feature>
<feature type="compositionally biased region" description="Basic and acidic residues" evidence="7">
    <location>
        <begin position="786"/>
        <end position="852"/>
    </location>
</feature>
<feature type="compositionally biased region" description="Basic and acidic residues" evidence="7">
    <location>
        <begin position="864"/>
        <end position="884"/>
    </location>
</feature>
<feature type="compositionally biased region" description="Polar residues" evidence="7">
    <location>
        <begin position="1083"/>
        <end position="1102"/>
    </location>
</feature>
<feature type="modified residue" description="Phosphoserine" evidence="2">
    <location>
        <position position="637"/>
    </location>
</feature>
<feature type="modified residue" description="Phosphoserine" evidence="2">
    <location>
        <position position="639"/>
    </location>
</feature>
<feature type="modified residue" description="Phosphoserine" evidence="1">
    <location>
        <position position="642"/>
    </location>
</feature>
<feature type="modified residue" description="Phosphoserine" evidence="1">
    <location>
        <position position="644"/>
    </location>
</feature>
<feature type="modified residue" description="Phosphoserine" evidence="1">
    <location>
        <position position="662"/>
    </location>
</feature>
<feature type="modified residue" description="Phosphoserine" evidence="3">
    <location>
        <position position="681"/>
    </location>
</feature>
<feature type="modified residue" description="Phosphoserine" evidence="1">
    <location>
        <position position="744"/>
    </location>
</feature>
<feature type="modified residue" description="Phosphoserine" evidence="3">
    <location>
        <position position="803"/>
    </location>
</feature>
<feature type="modified residue" description="Phosphoserine" evidence="3">
    <location>
        <position position="861"/>
    </location>
</feature>
<feature type="modified residue" description="Phosphoserine" evidence="3">
    <location>
        <position position="872"/>
    </location>
</feature>
<feature type="modified residue" description="Phosphoserine" evidence="1">
    <location>
        <position position="887"/>
    </location>
</feature>
<feature type="modified residue" description="Phosphoserine" evidence="1">
    <location>
        <position position="889"/>
    </location>
</feature>
<feature type="modified residue" description="Phosphoserine" evidence="1">
    <location>
        <position position="973"/>
    </location>
</feature>
<feature type="modified residue" description="Phosphoserine" evidence="3">
    <location>
        <position position="976"/>
    </location>
</feature>
<feature type="modified residue" description="Phosphoserine" evidence="2">
    <location>
        <position position="1044"/>
    </location>
</feature>
<feature type="modified residue" description="Phosphoserine" evidence="1">
    <location>
        <position position="1111"/>
    </location>
</feature>
<feature type="modified residue" description="Phosphoserine" evidence="2">
    <location>
        <position position="1116"/>
    </location>
</feature>
<feature type="modified residue" description="Phosphoserine" evidence="1">
    <location>
        <position position="1206"/>
    </location>
</feature>
<feature type="mutagenesis site" description="Knockin pigs show severe cardiac phenotypes, characterized by severe congenital dilated cardiomyopathy with advanced congestive heart failure and high mortality. Decreased localization to the nucleus associated with an increased localization to cytoplasmic ribonucleoprotein granules." evidence="8">
    <original>R</original>
    <variation>S</variation>
    <location>
        <position position="636"/>
    </location>
</feature>
<reference key="1">
    <citation type="submission" date="2009-11" db="EMBL/GenBank/DDBJ databases">
        <authorList>
            <consortium name="Porcine genome sequencing project"/>
        </authorList>
    </citation>
    <scope>NUCLEOTIDE SEQUENCE [LARGE SCALE GENOMIC DNA]</scope>
    <source>
        <strain>Duroc</strain>
    </source>
</reference>
<reference key="2">
    <citation type="journal article" date="2020" name="Nat. Med.">
        <title>Dysregulated ribonucleoprotein granules promote cardiomyopathy in RBM20 gene-edited pigs.</title>
        <authorList>
            <consortium name="Wanek Program Preclinical Pipeline"/>
            <person name="Schneider J.W."/>
            <person name="Oommen S."/>
            <person name="Qureshi M.Y."/>
            <person name="Goetsch S.C."/>
            <person name="Pease D.R."/>
            <person name="Sundsbak R.S."/>
            <person name="Guo W."/>
            <person name="Sun M."/>
            <person name="Sun H."/>
            <person name="Kuroyanagi H."/>
            <person name="Webster D.A."/>
            <person name="Coutts A.W."/>
            <person name="Holst K.A."/>
            <person name="Edwards B.S."/>
            <person name="Newville N."/>
            <person name="Hathcock M.A."/>
            <person name="Melkamu T."/>
            <person name="Briganti F."/>
            <person name="Wei W."/>
            <person name="Romanelli M.G."/>
            <person name="Fahrenkrug S.C."/>
            <person name="Frantz D.E."/>
            <person name="Olson T.M."/>
            <person name="Steinmetz L.M."/>
            <person name="Carlson D.F."/>
            <person name="Nelson T.J."/>
        </authorList>
    </citation>
    <scope>FUNCTION</scope>
    <scope>SUBCELLULAR LOCATION</scope>
    <scope>MUTAGENESIS OF ARG-636</scope>
</reference>
<sequence length="1223" mass="133295">MVLAAAMSQDAEPSGPEQPDRDARSVPGAPAPPAPPGPRGMQPPPPPPPPPPPPPQAGLPQIIQNAAKLLDKTPFSVSNPNPLLPSPASLQLAQLQAQLTLHRLKLAQTAVTNNTAAATVLNQVLSKVAMSQPLFNQLRHPSMISAPHGHTGVPPHATTVPSTRFPSNAITFSAGQTRGPGPSVNLPSQPPNTMVMHPFSGVMPQTPAQPAVILGIGKTGPAPAAAGFYEYGKATSGQAYGSETDSQPSFLPASASTSGSVTYEGHYSHSGQDSQAAFPKDFYGPTSQGSQVAGTFAADTAGGLKGEVGPLLQGPNSQWESPHGFSGQSKPDLTAAPNLWPPHPSQPYELYDPEEPTPDRTPPSLGGRLNHSKQGFSGARRRAKEEQAVLSMRPLQVQELNDFHGVAPLHLPHICSICDKKVFDLKDWELHVKGKLHAQKCLLFSENTGVRCVLGPAEGTLCASPNSTAVYNPAGNEDYASNLGTSYAALPARTFTQSNPAFPSASPGMNFVQRKLGAGRVVHICNLPEGSCTENDVINLGLPFGKVTNYILMKSTNQAFLEMAYTEAAQAMVQYYQEKSAMINGEKLLIRMSKRYKELQLKKPGKTVAAIIQDIHSQRERDMFREADRYGPERPRSRSPVSRSLSPRSHTPSFTSCSSSHSPPGPSRADWGNGRDSWEHSPYARREEERGPAPWRENGEDKRDRTDMWAHDRKHYPRQVDKTELDERLEGGRGYREKHPRSGSPSSLHSVSGYKSREDGYYRKEPKGKSDKYLKQQQEAPGRSRRKDEARLRDGRHPYPDDSGKEDGLEAKGTKSKQSEKNRTKRPDRDQEGADDRKESRMAESEAGKEEQDSMEESPSSVGRQEKETESSDAENTRTRKEQDSESGSEAEGESWYPTNMEELVTVDEVGEEEDFIMEPDIPELEEIVPIDQKDKICPEICPCVTTTLELDLAQDFTKEGVKTIGNGATEISLKSPKEPPSASTSCPSDMDVEMPGLNLDAERKPAECETGLSLEGSGCYEQQAKGAESSDVCLAPMLEQMSSPKPAEERAWQPGPFLDDGKVGGTPEDGAAEGRPLEEKASTPTETDLQSQACQGVSTQENSGYVEMKSLDARSPEYTEVELKQPLSLPSWEPEDVFSELSIPLGVEFVVPRTGFYCKLCGLFYTSEEMAKMSHCRSAVHYRNLQKYLSQLAEEGLKETEGAGSPRPEDSGIVPHFERKKL</sequence>
<comment type="function">
    <text evidence="1 3 8">RNA-binding protein that acts as a regulator of mRNA splicing of a subset of genes encoding key structural proteins involved in cardiac development, such as TTN (Titin), CACNA1C, CAMK2D or PDLIM5/ENH (PubMed:33188278). Acts as a repressor of mRNA splicing: specifically binds the 5'UCUU-3' motif that is predominantly found within intronic sequences of pre-mRNAs, leading to the exclusion of specific exons in target transcripts (By similarity). RBM20-mediated exon skipping is hormone-dependent and is essential for TTN isoform transition in both cardiac and skeletal muscles (By similarity). RBM20-mediated exon skipping of TTN provides substrates for the formation of circular RNA (circRNAs) from the TTN transcripts (By similarity). Together with RBM24, promotes the expression of short isoforms of PDLIM5/ENH in cardiomyocytes (By similarity).</text>
</comment>
<comment type="subunit">
    <text evidence="3">Associates with components of the U1 and U2 U1 small nuclear ribonucleoprotein complexes.</text>
</comment>
<comment type="subcellular location">
    <subcellularLocation>
        <location evidence="5 8">Nucleus</location>
    </subcellularLocation>
    <subcellularLocation>
        <location evidence="8">Cytoplasm</location>
        <location evidence="8">Cytoplasmic ribonucleoprotein granule</location>
    </subcellularLocation>
    <text evidence="3 8">The active form that regulates alternative splicing localizes to the nucleus (PubMed:33188278). Also localizes to cytoplasmic ribonucleoprotein granules; localization to cytoplasmic ribonucleoprotein granules plays an important regulatory role (PubMed:33188278). Subcellular localization is regulated by phosphorylation of different parts of the protein: while phosphorylation of the RS (arginine/serine-rich) region promotes nuclear localization, phosphorylation of the C-terminal disordered region promotes localization to cytoplasmic ribonucleoprotein granules (By similarity).</text>
</comment>
<comment type="PTM">
    <text evidence="3">Phosphorylation regulates the subcellular localization (By similarity). Phosphorylation of Ser-637 and Ser-639 in the RS (arginine/serine-rich) region promotes nuclear localization of the protein (By similarity). In contrast, phosphorylation of the C-terminal disordered region promotes localization to cytoplasmic ribonucleoprotein granules (By similarity).</text>
</comment>
<proteinExistence type="evidence at protein level"/>
<evidence type="ECO:0000250" key="1">
    <source>
        <dbReference type="UniProtKB" id="E9PT37"/>
    </source>
</evidence>
<evidence type="ECO:0000250" key="2">
    <source>
        <dbReference type="UniProtKB" id="Q3UQS8"/>
    </source>
</evidence>
<evidence type="ECO:0000250" key="3">
    <source>
        <dbReference type="UniProtKB" id="Q5T481"/>
    </source>
</evidence>
<evidence type="ECO:0000255" key="4"/>
<evidence type="ECO:0000255" key="5">
    <source>
        <dbReference type="PROSITE-ProRule" id="PRU00130"/>
    </source>
</evidence>
<evidence type="ECO:0000255" key="6">
    <source>
        <dbReference type="PROSITE-ProRule" id="PRU00176"/>
    </source>
</evidence>
<evidence type="ECO:0000256" key="7">
    <source>
        <dbReference type="SAM" id="MobiDB-lite"/>
    </source>
</evidence>
<evidence type="ECO:0000269" key="8">
    <source>
    </source>
</evidence>
<evidence type="ECO:0000303" key="9">
    <source>
    </source>
</evidence>
<evidence type="ECO:0000305" key="10"/>
<keyword id="KW-0963">Cytoplasm</keyword>
<keyword id="KW-0479">Metal-binding</keyword>
<keyword id="KW-0507">mRNA processing</keyword>
<keyword id="KW-0508">mRNA splicing</keyword>
<keyword id="KW-0539">Nucleus</keyword>
<keyword id="KW-0597">Phosphoprotein</keyword>
<keyword id="KW-1185">Reference proteome</keyword>
<keyword id="KW-0694">RNA-binding</keyword>
<keyword id="KW-0862">Zinc</keyword>
<keyword id="KW-0863">Zinc-finger</keyword>